<name>RS8E_PICTO</name>
<sequence>MTIFQGRATRKPSGGKLRPNHSKRRYELGREPTLTRLGDRELRKIRSYGGNSKFALLRCDYANVYNPKDKTTRKVKINTVKENSADPHYVQRNIMNRGTVISTELGDARITSRPGQDGVINAVLL</sequence>
<organism>
    <name type="scientific">Picrophilus torridus (strain ATCC 700027 / DSM 9790 / JCM 10055 / NBRC 100828 / KAW 2/3)</name>
    <dbReference type="NCBI Taxonomy" id="1122961"/>
    <lineage>
        <taxon>Archaea</taxon>
        <taxon>Methanobacteriati</taxon>
        <taxon>Thermoplasmatota</taxon>
        <taxon>Thermoplasmata</taxon>
        <taxon>Thermoplasmatales</taxon>
        <taxon>Picrophilaceae</taxon>
        <taxon>Picrophilus</taxon>
    </lineage>
</organism>
<protein>
    <recommendedName>
        <fullName evidence="1">Small ribosomal subunit protein eS8</fullName>
    </recommendedName>
    <alternativeName>
        <fullName evidence="3">30S ribosomal protein S8e</fullName>
    </alternativeName>
</protein>
<accession>Q6L0D3</accession>
<reference key="1">
    <citation type="journal article" date="2004" name="Proc. Natl. Acad. Sci. U.S.A.">
        <title>Genome sequence of Picrophilus torridus and its implications for life around pH 0.</title>
        <authorList>
            <person name="Fuetterer O."/>
            <person name="Angelov A."/>
            <person name="Liesegang H."/>
            <person name="Gottschalk G."/>
            <person name="Schleper C."/>
            <person name="Schepers B."/>
            <person name="Dock C."/>
            <person name="Antranikian G."/>
            <person name="Liebl W."/>
        </authorList>
    </citation>
    <scope>NUCLEOTIDE SEQUENCE [LARGE SCALE GENOMIC DNA]</scope>
    <source>
        <strain>ATCC 700027 / DSM 9790 / JCM 10055 / NBRC 100828 / KAW 2/3</strain>
    </source>
</reference>
<dbReference type="EMBL" id="AE017261">
    <property type="protein sequence ID" value="AAT43569.1"/>
    <property type="status" value="ALT_INIT"/>
    <property type="molecule type" value="Genomic_DNA"/>
</dbReference>
<dbReference type="RefSeq" id="WP_048059490.1">
    <property type="nucleotide sequence ID" value="NC_005877.1"/>
</dbReference>
<dbReference type="SMR" id="Q6L0D3"/>
<dbReference type="FunCoup" id="Q6L0D3">
    <property type="interactions" value="52"/>
</dbReference>
<dbReference type="STRING" id="263820.PTO0984"/>
<dbReference type="PaxDb" id="263820-PTO0984"/>
<dbReference type="GeneID" id="2845418"/>
<dbReference type="KEGG" id="pto:PTO0984"/>
<dbReference type="PATRIC" id="fig|263820.9.peg.1023"/>
<dbReference type="eggNOG" id="arCOG04154">
    <property type="taxonomic scope" value="Archaea"/>
</dbReference>
<dbReference type="HOGENOM" id="CLU_080597_2_1_2"/>
<dbReference type="InParanoid" id="Q6L0D3"/>
<dbReference type="OrthoDB" id="372305at2157"/>
<dbReference type="Proteomes" id="UP000000438">
    <property type="component" value="Chromosome"/>
</dbReference>
<dbReference type="GO" id="GO:1990904">
    <property type="term" value="C:ribonucleoprotein complex"/>
    <property type="evidence" value="ECO:0007669"/>
    <property type="project" value="UniProtKB-KW"/>
</dbReference>
<dbReference type="GO" id="GO:0005840">
    <property type="term" value="C:ribosome"/>
    <property type="evidence" value="ECO:0007669"/>
    <property type="project" value="UniProtKB-KW"/>
</dbReference>
<dbReference type="GO" id="GO:0003735">
    <property type="term" value="F:structural constituent of ribosome"/>
    <property type="evidence" value="ECO:0007669"/>
    <property type="project" value="InterPro"/>
</dbReference>
<dbReference type="GO" id="GO:0006412">
    <property type="term" value="P:translation"/>
    <property type="evidence" value="ECO:0007669"/>
    <property type="project" value="UniProtKB-UniRule"/>
</dbReference>
<dbReference type="CDD" id="cd11382">
    <property type="entry name" value="Ribosomal_S8e"/>
    <property type="match status" value="1"/>
</dbReference>
<dbReference type="Gene3D" id="2.40.10.310">
    <property type="match status" value="1"/>
</dbReference>
<dbReference type="HAMAP" id="MF_00029">
    <property type="entry name" value="Ribosomal_eS8"/>
    <property type="match status" value="1"/>
</dbReference>
<dbReference type="InterPro" id="IPR001047">
    <property type="entry name" value="Ribosomal_eS8"/>
</dbReference>
<dbReference type="InterPro" id="IPR018283">
    <property type="entry name" value="Ribosomal_eS8_CS"/>
</dbReference>
<dbReference type="InterPro" id="IPR020919">
    <property type="entry name" value="Ribosomal_protein_eS8_arc"/>
</dbReference>
<dbReference type="InterPro" id="IPR022309">
    <property type="entry name" value="Ribosomal_Se8/biogenesis_NSA2"/>
</dbReference>
<dbReference type="NCBIfam" id="TIGR00307">
    <property type="entry name" value="eS8"/>
    <property type="match status" value="1"/>
</dbReference>
<dbReference type="PANTHER" id="PTHR10394">
    <property type="entry name" value="40S RIBOSOMAL PROTEIN S8"/>
    <property type="match status" value="1"/>
</dbReference>
<dbReference type="Pfam" id="PF01201">
    <property type="entry name" value="Ribosomal_S8e"/>
    <property type="match status" value="1"/>
</dbReference>
<dbReference type="PROSITE" id="PS01193">
    <property type="entry name" value="RIBOSOMAL_S8E"/>
    <property type="match status" value="1"/>
</dbReference>
<comment type="subunit">
    <text evidence="1">Part of the 30S ribosomal subunit.</text>
</comment>
<comment type="similarity">
    <text evidence="1">Belongs to the eukaryotic ribosomal protein eS8 family.</text>
</comment>
<comment type="sequence caution" evidence="3">
    <conflict type="erroneous initiation">
        <sequence resource="EMBL-CDS" id="AAT43569"/>
    </conflict>
</comment>
<keyword id="KW-0687">Ribonucleoprotein</keyword>
<keyword id="KW-0689">Ribosomal protein</keyword>
<proteinExistence type="inferred from homology"/>
<gene>
    <name evidence="1" type="primary">rps8e</name>
    <name type="ordered locus">PTO0984</name>
</gene>
<evidence type="ECO:0000255" key="1">
    <source>
        <dbReference type="HAMAP-Rule" id="MF_00029"/>
    </source>
</evidence>
<evidence type="ECO:0000256" key="2">
    <source>
        <dbReference type="SAM" id="MobiDB-lite"/>
    </source>
</evidence>
<evidence type="ECO:0000305" key="3"/>
<feature type="chain" id="PRO_0000122273" description="Small ribosomal subunit protein eS8">
    <location>
        <begin position="1"/>
        <end position="125"/>
    </location>
</feature>
<feature type="region of interest" description="Disordered" evidence="2">
    <location>
        <begin position="1"/>
        <end position="30"/>
    </location>
</feature>